<accession>A0A067DT54</accession>
<sequence>MELYFSWLILALAIFIGTYAFVFGVLRRVNEWYHCGKLGEMKHSLPPGDMGWPLVGNMLSHQKAFKSSEPQSFIYNLFERYGRKGIYRNHIFGSPCVIVVAPEACKQVFLDDENFKMGYPTSTNKLTFRGSFITASKEGQKRIRKLATSPLKGHKAIVVYIDNIEEIVIKSLKGWASLDTPIEFLTEMRKATFKIIANIFLGSSSDSVIGSVEKHYIDYAHGLISPFPINLPGFSFHKAMKARDMLGEILQPVLNERRAMKSDEQKGRKGLIDLLMEVEDENGTKLDDLDIIDMLISFLSAGHESSAHIATWALIHLHKHPQTLRKAKEEQEDIIKKRPSTQKGLTIEEIKQMEYLAKVIAETLRMTNLSPSSFREAEADVNIQGYFIPKGWKVLVYNRGVHYNPENYPDPKQFDPSRWDNHTTRPGSFIPFGGGSRICPGADLAKLEISIFIHYFLLNYKLELQNPECPAEYLPVPRPSDQCLAKVVGFK</sequence>
<gene>
    <name evidence="4" type="primary">CYP88A37</name>
    <name evidence="7" type="ORF">CISIN_1g011210mg</name>
</gene>
<keyword id="KW-0349">Heme</keyword>
<keyword id="KW-0408">Iron</keyword>
<keyword id="KW-0472">Membrane</keyword>
<keyword id="KW-0479">Metal-binding</keyword>
<keyword id="KW-0503">Monooxygenase</keyword>
<keyword id="KW-0560">Oxidoreductase</keyword>
<keyword id="KW-1185">Reference proteome</keyword>
<keyword id="KW-0812">Transmembrane</keyword>
<keyword id="KW-1133">Transmembrane helix</keyword>
<dbReference type="EC" id="1.14.14.-" evidence="3"/>
<dbReference type="EMBL" id="OQ091240">
    <property type="protein sequence ID" value="WCJ12485.1"/>
    <property type="molecule type" value="mRNA"/>
</dbReference>
<dbReference type="EMBL" id="KK785289">
    <property type="protein sequence ID" value="KDO44740.1"/>
    <property type="molecule type" value="Genomic_DNA"/>
</dbReference>
<dbReference type="SMR" id="A0A067DT54"/>
<dbReference type="STRING" id="2711.A0A067DT54"/>
<dbReference type="PaxDb" id="2711-XP_006485428-1"/>
<dbReference type="eggNOG" id="KOG0157">
    <property type="taxonomic scope" value="Eukaryota"/>
</dbReference>
<dbReference type="UniPathway" id="UPA00213"/>
<dbReference type="Proteomes" id="UP000027120">
    <property type="component" value="Unassembled WGS sequence"/>
</dbReference>
<dbReference type="GO" id="GO:0005783">
    <property type="term" value="C:endoplasmic reticulum"/>
    <property type="evidence" value="ECO:0000318"/>
    <property type="project" value="GO_Central"/>
</dbReference>
<dbReference type="GO" id="GO:0016020">
    <property type="term" value="C:membrane"/>
    <property type="evidence" value="ECO:0007669"/>
    <property type="project" value="UniProtKB-SubCell"/>
</dbReference>
<dbReference type="GO" id="GO:0051777">
    <property type="term" value="F:ent-kaurenoic acid monooxygenase activity"/>
    <property type="evidence" value="ECO:0000318"/>
    <property type="project" value="GO_Central"/>
</dbReference>
<dbReference type="GO" id="GO:0020037">
    <property type="term" value="F:heme binding"/>
    <property type="evidence" value="ECO:0007669"/>
    <property type="project" value="InterPro"/>
</dbReference>
<dbReference type="GO" id="GO:0005506">
    <property type="term" value="F:iron ion binding"/>
    <property type="evidence" value="ECO:0007669"/>
    <property type="project" value="InterPro"/>
</dbReference>
<dbReference type="GO" id="GO:0048868">
    <property type="term" value="P:pollen tube development"/>
    <property type="evidence" value="ECO:0000318"/>
    <property type="project" value="GO_Central"/>
</dbReference>
<dbReference type="Gene3D" id="1.10.630.10">
    <property type="entry name" value="Cytochrome P450"/>
    <property type="match status" value="1"/>
</dbReference>
<dbReference type="InterPro" id="IPR001128">
    <property type="entry name" value="Cyt_P450"/>
</dbReference>
<dbReference type="InterPro" id="IPR017972">
    <property type="entry name" value="Cyt_P450_CS"/>
</dbReference>
<dbReference type="InterPro" id="IPR002401">
    <property type="entry name" value="Cyt_P450_E_grp-I"/>
</dbReference>
<dbReference type="InterPro" id="IPR036396">
    <property type="entry name" value="Cyt_P450_sf"/>
</dbReference>
<dbReference type="PANTHER" id="PTHR24286">
    <property type="entry name" value="CYTOCHROME P450 26"/>
    <property type="match status" value="1"/>
</dbReference>
<dbReference type="PANTHER" id="PTHR24286:SF199">
    <property type="entry name" value="CYTOCHROME P450 88D6"/>
    <property type="match status" value="1"/>
</dbReference>
<dbReference type="Pfam" id="PF00067">
    <property type="entry name" value="p450"/>
    <property type="match status" value="1"/>
</dbReference>
<dbReference type="PRINTS" id="PR00463">
    <property type="entry name" value="EP450I"/>
</dbReference>
<dbReference type="PRINTS" id="PR00385">
    <property type="entry name" value="P450"/>
</dbReference>
<dbReference type="SUPFAM" id="SSF48264">
    <property type="entry name" value="Cytochrome P450"/>
    <property type="match status" value="1"/>
</dbReference>
<dbReference type="PROSITE" id="PS00086">
    <property type="entry name" value="CYTOCHROME_P450"/>
    <property type="match status" value="1"/>
</dbReference>
<protein>
    <recommendedName>
        <fullName evidence="6">(1S)-1-hydroxy-luvungin A synthase CYP88A37</fullName>
        <ecNumber evidence="3">1.14.14.-</ecNumber>
    </recommendedName>
    <alternativeName>
        <fullName evidence="4">Cytochrome P450 family 88 subfamily A polypeptide 37</fullName>
        <shortName evidence="4">CsCYP88A37</shortName>
    </alternativeName>
</protein>
<reference key="1">
    <citation type="journal article" date="2023" name="Science">
        <title>Complex scaffold remodeling in plant triterpene biosynthesis.</title>
        <authorList>
            <person name="De La Pena R."/>
            <person name="Hodgson H."/>
            <person name="Liu J.C."/>
            <person name="Stephenson M.J."/>
            <person name="Martin A.C."/>
            <person name="Owen C."/>
            <person name="Harkess A."/>
            <person name="Leebens-Mack J."/>
            <person name="Jimenez L.E."/>
            <person name="Osbourn A."/>
            <person name="Sattely E.S."/>
        </authorList>
    </citation>
    <scope>NUCLEOTIDE SEQUENCE [MRNA]</scope>
    <scope>FUNCTION</scope>
    <scope>CATALYTIC ACTIVITY</scope>
    <scope>PATHWAY</scope>
    <scope>TISSUE SPECIFICITY</scope>
    <source>
        <strain>cv. Valencia</strain>
    </source>
</reference>
<reference key="2">
    <citation type="submission" date="2014-04" db="EMBL/GenBank/DDBJ databases">
        <authorList>
            <consortium name="International Citrus Genome Consortium"/>
            <person name="Gmitter F."/>
            <person name="Chen C."/>
            <person name="Farmerie W."/>
            <person name="Harkins T."/>
            <person name="Desany B."/>
            <person name="Mohiuddin M."/>
            <person name="Kodira C."/>
            <person name="Borodovsky M."/>
            <person name="Lomsadze A."/>
            <person name="Burns P."/>
            <person name="Jenkins J."/>
            <person name="Prochnik S."/>
            <person name="Shu S."/>
            <person name="Chapman J."/>
            <person name="Pitluck S."/>
            <person name="Schmutz J."/>
            <person name="Rokhsar D."/>
        </authorList>
    </citation>
    <scope>NUCLEOTIDE SEQUENCE [LARGE SCALE GENOMIC DNA]</scope>
    <source>
        <strain>cv. Ridge Pineapple sweet orange</strain>
    </source>
</reference>
<comment type="function">
    <text evidence="3">Monooxygenase involved in the biosynthesis of limonoids triterpene natural products such as limonin, a compound with insecticidal activity responsible for the bitter taste in citrus (PubMed:36701471). Catalyzes the conversion of luvungin A to (1S)-1-hydroxy-luvungin A (PubMed:36701471).</text>
</comment>
<comment type="catalytic activity">
    <reaction evidence="3">
        <text>luvungin A + reduced [NADPH--hemoprotein reductase] + O2 = (1S)-1-hydroxy-luvungin A + oxidized [NADPH--hemoprotein reductase] + H2O + H(+)</text>
        <dbReference type="Rhea" id="RHEA:80319"/>
        <dbReference type="Rhea" id="RHEA-COMP:11964"/>
        <dbReference type="Rhea" id="RHEA-COMP:11965"/>
        <dbReference type="ChEBI" id="CHEBI:15377"/>
        <dbReference type="ChEBI" id="CHEBI:15378"/>
        <dbReference type="ChEBI" id="CHEBI:15379"/>
        <dbReference type="ChEBI" id="CHEBI:57618"/>
        <dbReference type="ChEBI" id="CHEBI:58210"/>
        <dbReference type="ChEBI" id="CHEBI:231475"/>
        <dbReference type="ChEBI" id="CHEBI:231477"/>
    </reaction>
    <physiologicalReaction direction="left-to-right" evidence="3">
        <dbReference type="Rhea" id="RHEA:80320"/>
    </physiologicalReaction>
</comment>
<comment type="cofactor">
    <cofactor evidence="1">
        <name>heme</name>
        <dbReference type="ChEBI" id="CHEBI:30413"/>
    </cofactor>
</comment>
<comment type="pathway">
    <text evidence="3">Secondary metabolite biosynthesis; terpenoid biosynthesis.</text>
</comment>
<comment type="subcellular location">
    <subcellularLocation>
        <location evidence="2">Membrane</location>
        <topology evidence="2">Single-pass membrane protein</topology>
    </subcellularLocation>
</comment>
<comment type="tissue specificity">
    <text evidence="3">Expressed in maturing fruits and in juice vesicles.</text>
</comment>
<comment type="similarity">
    <text evidence="5">Belongs to the cytochrome P450 family.</text>
</comment>
<feature type="chain" id="PRO_0000461372" description="(1S)-1-hydroxy-luvungin A synthase CYP88A37">
    <location>
        <begin position="1"/>
        <end position="491"/>
    </location>
</feature>
<feature type="transmembrane region" description="Helical" evidence="2">
    <location>
        <begin position="5"/>
        <end position="25"/>
    </location>
</feature>
<feature type="binding site" description="axial binding residue" evidence="1">
    <location>
        <position position="439"/>
    </location>
    <ligand>
        <name>heme</name>
        <dbReference type="ChEBI" id="CHEBI:30413"/>
    </ligand>
    <ligandPart>
        <name>Fe</name>
        <dbReference type="ChEBI" id="CHEBI:18248"/>
    </ligandPart>
</feature>
<feature type="sequence conflict" description="In Ref. 1; WCJ12485." evidence="5" ref="1">
    <original>Y</original>
    <variation>D</variation>
    <location>
        <position position="4"/>
    </location>
</feature>
<feature type="sequence conflict" description="In Ref. 1; WCJ12485." evidence="5" ref="1">
    <original>K</original>
    <variation>N</variation>
    <location>
        <position position="42"/>
    </location>
</feature>
<name>C8A37_CITSI</name>
<evidence type="ECO:0000250" key="1">
    <source>
        <dbReference type="UniProtKB" id="Q96242"/>
    </source>
</evidence>
<evidence type="ECO:0000255" key="2"/>
<evidence type="ECO:0000269" key="3">
    <source>
    </source>
</evidence>
<evidence type="ECO:0000303" key="4">
    <source>
    </source>
</evidence>
<evidence type="ECO:0000305" key="5"/>
<evidence type="ECO:0000305" key="6">
    <source>
    </source>
</evidence>
<evidence type="ECO:0000312" key="7">
    <source>
        <dbReference type="EMBL" id="KDO44740.1"/>
    </source>
</evidence>
<organism>
    <name type="scientific">Citrus sinensis</name>
    <name type="common">Sweet orange</name>
    <name type="synonym">Citrus aurantium var. sinensis</name>
    <dbReference type="NCBI Taxonomy" id="2711"/>
    <lineage>
        <taxon>Eukaryota</taxon>
        <taxon>Viridiplantae</taxon>
        <taxon>Streptophyta</taxon>
        <taxon>Embryophyta</taxon>
        <taxon>Tracheophyta</taxon>
        <taxon>Spermatophyta</taxon>
        <taxon>Magnoliopsida</taxon>
        <taxon>eudicotyledons</taxon>
        <taxon>Gunneridae</taxon>
        <taxon>Pentapetalae</taxon>
        <taxon>rosids</taxon>
        <taxon>malvids</taxon>
        <taxon>Sapindales</taxon>
        <taxon>Rutaceae</taxon>
        <taxon>Aurantioideae</taxon>
        <taxon>Citrus</taxon>
    </lineage>
</organism>
<proteinExistence type="evidence at protein level"/>